<dbReference type="EC" id="4.2.1.126" evidence="1"/>
<dbReference type="EMBL" id="CP000813">
    <property type="protein sequence ID" value="ABV60857.1"/>
    <property type="molecule type" value="Genomic_DNA"/>
</dbReference>
<dbReference type="RefSeq" id="WP_012008737.1">
    <property type="nucleotide sequence ID" value="NC_009848.4"/>
</dbReference>
<dbReference type="SMR" id="A8F9E0"/>
<dbReference type="STRING" id="315750.BPUM_0158"/>
<dbReference type="GeneID" id="5619403"/>
<dbReference type="KEGG" id="bpu:BPUM_0158"/>
<dbReference type="eggNOG" id="COG2103">
    <property type="taxonomic scope" value="Bacteria"/>
</dbReference>
<dbReference type="HOGENOM" id="CLU_049049_1_1_9"/>
<dbReference type="OrthoDB" id="9813395at2"/>
<dbReference type="UniPathway" id="UPA00342"/>
<dbReference type="Proteomes" id="UP000001355">
    <property type="component" value="Chromosome"/>
</dbReference>
<dbReference type="GO" id="GO:0097367">
    <property type="term" value="F:carbohydrate derivative binding"/>
    <property type="evidence" value="ECO:0007669"/>
    <property type="project" value="InterPro"/>
</dbReference>
<dbReference type="GO" id="GO:0016835">
    <property type="term" value="F:carbon-oxygen lyase activity"/>
    <property type="evidence" value="ECO:0007669"/>
    <property type="project" value="UniProtKB-UniRule"/>
</dbReference>
<dbReference type="GO" id="GO:0016803">
    <property type="term" value="F:ether hydrolase activity"/>
    <property type="evidence" value="ECO:0007669"/>
    <property type="project" value="TreeGrafter"/>
</dbReference>
<dbReference type="GO" id="GO:0046348">
    <property type="term" value="P:amino sugar catabolic process"/>
    <property type="evidence" value="ECO:0007669"/>
    <property type="project" value="InterPro"/>
</dbReference>
<dbReference type="GO" id="GO:0097173">
    <property type="term" value="P:N-acetylmuramic acid catabolic process"/>
    <property type="evidence" value="ECO:0007669"/>
    <property type="project" value="UniProtKB-UniPathway"/>
</dbReference>
<dbReference type="GO" id="GO:0009254">
    <property type="term" value="P:peptidoglycan turnover"/>
    <property type="evidence" value="ECO:0007669"/>
    <property type="project" value="TreeGrafter"/>
</dbReference>
<dbReference type="CDD" id="cd05007">
    <property type="entry name" value="SIS_Etherase"/>
    <property type="match status" value="1"/>
</dbReference>
<dbReference type="FunFam" id="1.10.8.1080:FF:000001">
    <property type="entry name" value="N-acetylmuramic acid 6-phosphate etherase"/>
    <property type="match status" value="1"/>
</dbReference>
<dbReference type="FunFam" id="3.40.50.10490:FF:000014">
    <property type="entry name" value="N-acetylmuramic acid 6-phosphate etherase"/>
    <property type="match status" value="1"/>
</dbReference>
<dbReference type="Gene3D" id="1.10.8.1080">
    <property type="match status" value="1"/>
</dbReference>
<dbReference type="Gene3D" id="3.40.50.10490">
    <property type="entry name" value="Glucose-6-phosphate isomerase like protein, domain 1"/>
    <property type="match status" value="1"/>
</dbReference>
<dbReference type="HAMAP" id="MF_00068">
    <property type="entry name" value="MurQ"/>
    <property type="match status" value="1"/>
</dbReference>
<dbReference type="InterPro" id="IPR005488">
    <property type="entry name" value="Etherase_MurQ"/>
</dbReference>
<dbReference type="InterPro" id="IPR005486">
    <property type="entry name" value="Glucokinase_regulatory_CS"/>
</dbReference>
<dbReference type="InterPro" id="IPR040190">
    <property type="entry name" value="MURQ/GCKR"/>
</dbReference>
<dbReference type="InterPro" id="IPR001347">
    <property type="entry name" value="SIS_dom"/>
</dbReference>
<dbReference type="InterPro" id="IPR046348">
    <property type="entry name" value="SIS_dom_sf"/>
</dbReference>
<dbReference type="NCBIfam" id="TIGR00274">
    <property type="entry name" value="N-acetylmuramic acid 6-phosphate etherase"/>
    <property type="match status" value="1"/>
</dbReference>
<dbReference type="NCBIfam" id="NF003915">
    <property type="entry name" value="PRK05441.1"/>
    <property type="match status" value="1"/>
</dbReference>
<dbReference type="NCBIfam" id="NF009222">
    <property type="entry name" value="PRK12570.1"/>
    <property type="match status" value="1"/>
</dbReference>
<dbReference type="PANTHER" id="PTHR10088">
    <property type="entry name" value="GLUCOKINASE REGULATORY PROTEIN"/>
    <property type="match status" value="1"/>
</dbReference>
<dbReference type="PANTHER" id="PTHR10088:SF4">
    <property type="entry name" value="GLUCOKINASE REGULATORY PROTEIN"/>
    <property type="match status" value="1"/>
</dbReference>
<dbReference type="Pfam" id="PF20741">
    <property type="entry name" value="GKRP-like_C"/>
    <property type="match status" value="1"/>
</dbReference>
<dbReference type="Pfam" id="PF22645">
    <property type="entry name" value="GKRP_SIS_N"/>
    <property type="match status" value="1"/>
</dbReference>
<dbReference type="SUPFAM" id="SSF53697">
    <property type="entry name" value="SIS domain"/>
    <property type="match status" value="1"/>
</dbReference>
<dbReference type="PROSITE" id="PS01272">
    <property type="entry name" value="GCKR"/>
    <property type="match status" value="1"/>
</dbReference>
<dbReference type="PROSITE" id="PS51464">
    <property type="entry name" value="SIS"/>
    <property type="match status" value="1"/>
</dbReference>
<proteinExistence type="inferred from homology"/>
<feature type="chain" id="PRO_1000057456" description="N-acetylmuramic acid 6-phosphate etherase">
    <location>
        <begin position="1"/>
        <end position="303"/>
    </location>
</feature>
<feature type="domain" description="SIS" evidence="1">
    <location>
        <begin position="58"/>
        <end position="221"/>
    </location>
</feature>
<feature type="region of interest" description="Disordered" evidence="2">
    <location>
        <begin position="1"/>
        <end position="21"/>
    </location>
</feature>
<feature type="active site" description="Proton donor" evidence="1">
    <location>
        <position position="86"/>
    </location>
</feature>
<feature type="active site" evidence="1">
    <location>
        <position position="117"/>
    </location>
</feature>
<keyword id="KW-0119">Carbohydrate metabolism</keyword>
<keyword id="KW-0456">Lyase</keyword>
<accession>A8F9E0</accession>
<evidence type="ECO:0000255" key="1">
    <source>
        <dbReference type="HAMAP-Rule" id="MF_00068"/>
    </source>
</evidence>
<evidence type="ECO:0000256" key="2">
    <source>
        <dbReference type="SAM" id="MobiDB-lite"/>
    </source>
</evidence>
<organism>
    <name type="scientific">Bacillus pumilus (strain SAFR-032)</name>
    <dbReference type="NCBI Taxonomy" id="315750"/>
    <lineage>
        <taxon>Bacteria</taxon>
        <taxon>Bacillati</taxon>
        <taxon>Bacillota</taxon>
        <taxon>Bacilli</taxon>
        <taxon>Bacillales</taxon>
        <taxon>Bacillaceae</taxon>
        <taxon>Bacillus</taxon>
    </lineage>
</organism>
<gene>
    <name evidence="1" type="primary">murQ</name>
    <name type="ordered locus">BPUM_0158</name>
</gene>
<comment type="function">
    <text evidence="1">Specifically catalyzes the cleavage of the D-lactyl ether substituent of MurNAc 6-phosphate, producing GlcNAc 6-phosphate and D-lactate.</text>
</comment>
<comment type="catalytic activity">
    <reaction evidence="1">
        <text>N-acetyl-D-muramate 6-phosphate + H2O = N-acetyl-D-glucosamine 6-phosphate + (R)-lactate</text>
        <dbReference type="Rhea" id="RHEA:26410"/>
        <dbReference type="ChEBI" id="CHEBI:15377"/>
        <dbReference type="ChEBI" id="CHEBI:16004"/>
        <dbReference type="ChEBI" id="CHEBI:57513"/>
        <dbReference type="ChEBI" id="CHEBI:58722"/>
        <dbReference type="EC" id="4.2.1.126"/>
    </reaction>
</comment>
<comment type="pathway">
    <text evidence="1">Amino-sugar metabolism; N-acetylmuramate degradation.</text>
</comment>
<comment type="subunit">
    <text evidence="1">Homodimer.</text>
</comment>
<comment type="miscellaneous">
    <text evidence="1">A lyase-type mechanism (elimination/hydration) is suggested for the cleavage of the lactyl ether bond of MurNAc 6-phosphate, with the formation of an alpha,beta-unsaturated aldehyde intermediate with (E)-stereochemistry, followed by the syn addition of water to give product.</text>
</comment>
<comment type="similarity">
    <text evidence="1">Belongs to the GCKR-like family. MurNAc-6-P etherase subfamily.</text>
</comment>
<sequence length="303" mass="32426">MQPSQLRSLTTESRNPNTMGISQADPLEILQMINEEDMKVAQAVNLVLPHVKTASDFAYDSISNGGRLIYLGAGTSGRLGVMDAVECPPTYSVSPDVIVGIMAGGDSAFSHAAEDVEDSEEAGKQDLVHIHLTSKDTVVGIAASGRTPYIIGALNYAKSIGAKTVALSCNEQSKISELADCAIEVIVGPEAITGSTRMKAASAHKMILNMLSTSVMIRQGKVYENLMVDVKVSNHKLKERAITIIQHVTNASYEQALKTLEAADLEVKTAIVMLQTNTDKKTAKDLLNKANGHIDKAISHHQS</sequence>
<protein>
    <recommendedName>
        <fullName evidence="1">N-acetylmuramic acid 6-phosphate etherase</fullName>
        <shortName evidence="1">MurNAc-6-P etherase</shortName>
        <ecNumber evidence="1">4.2.1.126</ecNumber>
    </recommendedName>
    <alternativeName>
        <fullName evidence="1">N-acetylmuramic acid 6-phosphate hydrolase</fullName>
    </alternativeName>
    <alternativeName>
        <fullName evidence="1">N-acetylmuramic acid 6-phosphate lyase</fullName>
    </alternativeName>
</protein>
<name>MURQ_BACP2</name>
<reference key="1">
    <citation type="journal article" date="2007" name="PLoS ONE">
        <title>Paradoxical DNA repair and peroxide resistance gene conservation in Bacillus pumilus SAFR-032.</title>
        <authorList>
            <person name="Gioia J."/>
            <person name="Yerrapragada S."/>
            <person name="Qin X."/>
            <person name="Jiang H."/>
            <person name="Igboeli O.C."/>
            <person name="Muzny D."/>
            <person name="Dugan-Rocha S."/>
            <person name="Ding Y."/>
            <person name="Hawes A."/>
            <person name="Liu W."/>
            <person name="Perez L."/>
            <person name="Kovar C."/>
            <person name="Dinh H."/>
            <person name="Lee S."/>
            <person name="Nazareth L."/>
            <person name="Blyth P."/>
            <person name="Holder M."/>
            <person name="Buhay C."/>
            <person name="Tirumalai M.R."/>
            <person name="Liu Y."/>
            <person name="Dasgupta I."/>
            <person name="Bokhetache L."/>
            <person name="Fujita M."/>
            <person name="Karouia F."/>
            <person name="Eswara Moorthy P."/>
            <person name="Siefert J."/>
            <person name="Uzman A."/>
            <person name="Buzumbo P."/>
            <person name="Verma A."/>
            <person name="Zwiya H."/>
            <person name="McWilliams B.D."/>
            <person name="Olowu A."/>
            <person name="Clinkenbeard K.D."/>
            <person name="Newcombe D."/>
            <person name="Golebiewski L."/>
            <person name="Petrosino J.F."/>
            <person name="Nicholson W.L."/>
            <person name="Fox G.E."/>
            <person name="Venkateswaran K."/>
            <person name="Highlander S.K."/>
            <person name="Weinstock G.M."/>
        </authorList>
    </citation>
    <scope>NUCLEOTIDE SEQUENCE [LARGE SCALE GENOMIC DNA]</scope>
    <source>
        <strain>SAFR-032</strain>
    </source>
</reference>